<keyword id="KW-0269">Exonuclease</keyword>
<keyword id="KW-0378">Hydrolase</keyword>
<keyword id="KW-0460">Magnesium</keyword>
<keyword id="KW-0479">Metal-binding</keyword>
<keyword id="KW-0540">Nuclease</keyword>
<keyword id="KW-0819">tRNA processing</keyword>
<name>RNT_SHIBS</name>
<reference key="1">
    <citation type="journal article" date="2005" name="Nucleic Acids Res.">
        <title>Genome dynamics and diversity of Shigella species, the etiologic agents of bacillary dysentery.</title>
        <authorList>
            <person name="Yang F."/>
            <person name="Yang J."/>
            <person name="Zhang X."/>
            <person name="Chen L."/>
            <person name="Jiang Y."/>
            <person name="Yan Y."/>
            <person name="Tang X."/>
            <person name="Wang J."/>
            <person name="Xiong Z."/>
            <person name="Dong J."/>
            <person name="Xue Y."/>
            <person name="Zhu Y."/>
            <person name="Xu X."/>
            <person name="Sun L."/>
            <person name="Chen S."/>
            <person name="Nie H."/>
            <person name="Peng J."/>
            <person name="Xu J."/>
            <person name="Wang Y."/>
            <person name="Yuan Z."/>
            <person name="Wen Y."/>
            <person name="Yao Z."/>
            <person name="Shen Y."/>
            <person name="Qiang B."/>
            <person name="Hou Y."/>
            <person name="Yu J."/>
            <person name="Jin Q."/>
        </authorList>
    </citation>
    <scope>NUCLEOTIDE SEQUENCE [LARGE SCALE GENOMIC DNA]</scope>
    <source>
        <strain>Sb227</strain>
    </source>
</reference>
<dbReference type="EC" id="3.1.13.-" evidence="1"/>
<dbReference type="EMBL" id="CP000036">
    <property type="protein sequence ID" value="ABB66101.1"/>
    <property type="molecule type" value="Genomic_DNA"/>
</dbReference>
<dbReference type="RefSeq" id="WP_001282279.1">
    <property type="nucleotide sequence ID" value="NC_007613.1"/>
</dbReference>
<dbReference type="SMR" id="Q321A7"/>
<dbReference type="KEGG" id="sbo:SBO_1483"/>
<dbReference type="HOGENOM" id="CLU_082724_0_0_6"/>
<dbReference type="Proteomes" id="UP000007067">
    <property type="component" value="Chromosome"/>
</dbReference>
<dbReference type="GO" id="GO:0005829">
    <property type="term" value="C:cytosol"/>
    <property type="evidence" value="ECO:0007669"/>
    <property type="project" value="TreeGrafter"/>
</dbReference>
<dbReference type="GO" id="GO:0008408">
    <property type="term" value="F:3'-5' exonuclease activity"/>
    <property type="evidence" value="ECO:0007669"/>
    <property type="project" value="TreeGrafter"/>
</dbReference>
<dbReference type="GO" id="GO:0000287">
    <property type="term" value="F:magnesium ion binding"/>
    <property type="evidence" value="ECO:0007669"/>
    <property type="project" value="UniProtKB-UniRule"/>
</dbReference>
<dbReference type="GO" id="GO:0003676">
    <property type="term" value="F:nucleic acid binding"/>
    <property type="evidence" value="ECO:0007669"/>
    <property type="project" value="InterPro"/>
</dbReference>
<dbReference type="GO" id="GO:0016896">
    <property type="term" value="F:RNA exonuclease activity, producing 5'-phosphomonoesters"/>
    <property type="evidence" value="ECO:0007669"/>
    <property type="project" value="UniProtKB-UniRule"/>
</dbReference>
<dbReference type="GO" id="GO:0045004">
    <property type="term" value="P:DNA replication proofreading"/>
    <property type="evidence" value="ECO:0007669"/>
    <property type="project" value="TreeGrafter"/>
</dbReference>
<dbReference type="GO" id="GO:0008033">
    <property type="term" value="P:tRNA processing"/>
    <property type="evidence" value="ECO:0007669"/>
    <property type="project" value="UniProtKB-KW"/>
</dbReference>
<dbReference type="CDD" id="cd06134">
    <property type="entry name" value="RNaseT"/>
    <property type="match status" value="1"/>
</dbReference>
<dbReference type="FunFam" id="3.30.420.10:FF:000009">
    <property type="entry name" value="Ribonuclease T"/>
    <property type="match status" value="1"/>
</dbReference>
<dbReference type="Gene3D" id="3.30.420.10">
    <property type="entry name" value="Ribonuclease H-like superfamily/Ribonuclease H"/>
    <property type="match status" value="1"/>
</dbReference>
<dbReference type="HAMAP" id="MF_00157">
    <property type="entry name" value="RNase_T"/>
    <property type="match status" value="1"/>
</dbReference>
<dbReference type="InterPro" id="IPR013520">
    <property type="entry name" value="Exonuclease_RNaseT/DNA_pol3"/>
</dbReference>
<dbReference type="InterPro" id="IPR005987">
    <property type="entry name" value="RNase_T"/>
</dbReference>
<dbReference type="InterPro" id="IPR012337">
    <property type="entry name" value="RNaseH-like_sf"/>
</dbReference>
<dbReference type="InterPro" id="IPR036397">
    <property type="entry name" value="RNaseH_sf"/>
</dbReference>
<dbReference type="NCBIfam" id="TIGR01298">
    <property type="entry name" value="RNaseT"/>
    <property type="match status" value="1"/>
</dbReference>
<dbReference type="PANTHER" id="PTHR30231">
    <property type="entry name" value="DNA POLYMERASE III SUBUNIT EPSILON"/>
    <property type="match status" value="1"/>
</dbReference>
<dbReference type="PANTHER" id="PTHR30231:SF2">
    <property type="entry name" value="RIBONUCLEASE T"/>
    <property type="match status" value="1"/>
</dbReference>
<dbReference type="Pfam" id="PF00929">
    <property type="entry name" value="RNase_T"/>
    <property type="match status" value="1"/>
</dbReference>
<dbReference type="SMART" id="SM00479">
    <property type="entry name" value="EXOIII"/>
    <property type="match status" value="1"/>
</dbReference>
<dbReference type="SUPFAM" id="SSF53098">
    <property type="entry name" value="Ribonuclease H-like"/>
    <property type="match status" value="1"/>
</dbReference>
<gene>
    <name evidence="1" type="primary">rnt</name>
    <name type="ordered locus">SBO_1483</name>
</gene>
<organism>
    <name type="scientific">Shigella boydii serotype 4 (strain Sb227)</name>
    <dbReference type="NCBI Taxonomy" id="300268"/>
    <lineage>
        <taxon>Bacteria</taxon>
        <taxon>Pseudomonadati</taxon>
        <taxon>Pseudomonadota</taxon>
        <taxon>Gammaproteobacteria</taxon>
        <taxon>Enterobacterales</taxon>
        <taxon>Enterobacteriaceae</taxon>
        <taxon>Shigella</taxon>
    </lineage>
</organism>
<sequence>MSDNAQLTGLCDRFRGFYPVVIDVETAGFNAKTDALLEIAAITLKMDEQGWLMPDTTLHFHVEPFVGANLQPEALAFNGIDPNDPDRGAVSEYEALHEIFKVVRKGIKASGCNRAIMVAHNANFDHSFMIAAAERASLKRNPFHPFATFDTAALAGLALGQTVLSKACQTAGMDFDSTQAHSALYDTERTAVLFCEIVNRWKRLGGWPLPAAEEV</sequence>
<evidence type="ECO:0000255" key="1">
    <source>
        <dbReference type="HAMAP-Rule" id="MF_00157"/>
    </source>
</evidence>
<proteinExistence type="inferred from homology"/>
<protein>
    <recommendedName>
        <fullName evidence="1">Ribonuclease T</fullName>
        <ecNumber evidence="1">3.1.13.-</ecNumber>
    </recommendedName>
    <alternativeName>
        <fullName evidence="1">Exoribonuclease T</fullName>
        <shortName evidence="1">RNase T</shortName>
    </alternativeName>
</protein>
<comment type="function">
    <text evidence="1">Trims short 3' overhangs of a variety of RNA species, leaving a one or two nucleotide 3' overhang. Responsible for the end-turnover of tRNA: specifically removes the terminal AMP residue from uncharged tRNA (tRNA-C-C-A). Also appears to be involved in tRNA biosynthesis.</text>
</comment>
<comment type="cofactor">
    <cofactor evidence="1">
        <name>Mg(2+)</name>
        <dbReference type="ChEBI" id="CHEBI:18420"/>
    </cofactor>
    <text evidence="1">Binds two Mg(2+) per subunit. The active form of the enzyme binds two Mg(2+) ions in its active site. The first Mg(2+) forms only one salt bridge with the protein.</text>
</comment>
<comment type="subunit">
    <text evidence="1">Homodimer.</text>
</comment>
<comment type="similarity">
    <text evidence="1">Belongs to the RNase T family.</text>
</comment>
<accession>Q321A7</accession>
<feature type="chain" id="PRO_1000011421" description="Ribonuclease T">
    <location>
        <begin position="1"/>
        <end position="215"/>
    </location>
</feature>
<feature type="domain" description="Exonuclease" evidence="1">
    <location>
        <begin position="20"/>
        <end position="194"/>
    </location>
</feature>
<feature type="active site" description="Proton donor/acceptor" evidence="1">
    <location>
        <position position="181"/>
    </location>
</feature>
<feature type="binding site" evidence="1">
    <location>
        <position position="23"/>
    </location>
    <ligand>
        <name>Mg(2+)</name>
        <dbReference type="ChEBI" id="CHEBI:18420"/>
        <label>1</label>
        <note>catalytic</note>
    </ligand>
</feature>
<feature type="binding site" evidence="1">
    <location>
        <position position="23"/>
    </location>
    <ligand>
        <name>Mg(2+)</name>
        <dbReference type="ChEBI" id="CHEBI:18420"/>
        <label>2</label>
        <note>catalytic</note>
    </ligand>
</feature>
<feature type="binding site" evidence="1">
    <location>
        <position position="25"/>
    </location>
    <ligand>
        <name>Mg(2+)</name>
        <dbReference type="ChEBI" id="CHEBI:18420"/>
        <label>2</label>
        <note>catalytic</note>
    </ligand>
</feature>
<feature type="binding site" evidence="1">
    <location>
        <position position="181"/>
    </location>
    <ligand>
        <name>Mg(2+)</name>
        <dbReference type="ChEBI" id="CHEBI:18420"/>
        <label>2</label>
        <note>catalytic</note>
    </ligand>
</feature>
<feature type="binding site" evidence="1">
    <location>
        <position position="186"/>
    </location>
    <ligand>
        <name>Mg(2+)</name>
        <dbReference type="ChEBI" id="CHEBI:18420"/>
        <label>2</label>
        <note>catalytic</note>
    </ligand>
</feature>
<feature type="site" description="Important for substrate binding and specificity" evidence="1">
    <location>
        <position position="29"/>
    </location>
</feature>
<feature type="site" description="Important for substrate binding and specificity" evidence="1">
    <location>
        <position position="77"/>
    </location>
</feature>
<feature type="site" description="Important for substrate binding and specificity" evidence="1">
    <location>
        <position position="124"/>
    </location>
</feature>
<feature type="site" description="Important for substrate binding and specificity" evidence="1">
    <location>
        <position position="146"/>
    </location>
</feature>